<name>GLNB3_METBA</name>
<feature type="chain" id="PRO_0000139802" description="Nitrogen fixation nifHD2 region GlnB-like protein 1">
    <location>
        <begin position="1"/>
        <end position="105"/>
    </location>
</feature>
<keyword id="KW-0535">Nitrogen fixation</keyword>
<keyword id="KW-0804">Transcription</keyword>
<keyword id="KW-0805">Transcription regulation</keyword>
<accession>P54807</accession>
<protein>
    <recommendedName>
        <fullName>Nitrogen fixation nifHD2 region GlnB-like protein 1</fullName>
    </recommendedName>
    <alternativeName>
        <fullName>ORF-105</fullName>
    </alternativeName>
</protein>
<proteinExistence type="inferred from homology"/>
<sequence length="105" mass="11480">MKMVRAILRPEWTEEVTDGLAEAGYYSLTKINVFGRGKQKGITVGDVHYDELAKTMIMMAVEDEAVDKVIKIISGKAYTGNMGDGKIFVNTIEAAYTISSGEKGL</sequence>
<evidence type="ECO:0000255" key="1">
    <source>
        <dbReference type="PROSITE-ProRule" id="PRU00675"/>
    </source>
</evidence>
<dbReference type="EMBL" id="X56072">
    <property type="protein sequence ID" value="CAA39553.1"/>
    <property type="molecule type" value="Genomic_DNA"/>
</dbReference>
<dbReference type="SMR" id="P54807"/>
<dbReference type="GO" id="GO:0005829">
    <property type="term" value="C:cytosol"/>
    <property type="evidence" value="ECO:0007669"/>
    <property type="project" value="TreeGrafter"/>
</dbReference>
<dbReference type="GO" id="GO:0005524">
    <property type="term" value="F:ATP binding"/>
    <property type="evidence" value="ECO:0007669"/>
    <property type="project" value="TreeGrafter"/>
</dbReference>
<dbReference type="GO" id="GO:0030234">
    <property type="term" value="F:enzyme regulator activity"/>
    <property type="evidence" value="ECO:0007669"/>
    <property type="project" value="InterPro"/>
</dbReference>
<dbReference type="GO" id="GO:0009399">
    <property type="term" value="P:nitrogen fixation"/>
    <property type="evidence" value="ECO:0007669"/>
    <property type="project" value="UniProtKB-KW"/>
</dbReference>
<dbReference type="GO" id="GO:0006808">
    <property type="term" value="P:regulation of nitrogen utilization"/>
    <property type="evidence" value="ECO:0007669"/>
    <property type="project" value="InterPro"/>
</dbReference>
<dbReference type="Gene3D" id="3.30.70.120">
    <property type="match status" value="1"/>
</dbReference>
<dbReference type="InterPro" id="IPR002187">
    <property type="entry name" value="N-reg_PII"/>
</dbReference>
<dbReference type="InterPro" id="IPR011322">
    <property type="entry name" value="N-reg_PII-like_a/b"/>
</dbReference>
<dbReference type="InterPro" id="IPR015867">
    <property type="entry name" value="N-reg_PII/ATP_PRibTrfase_C"/>
</dbReference>
<dbReference type="InterPro" id="IPR017918">
    <property type="entry name" value="N-reg_PII_CS"/>
</dbReference>
<dbReference type="PANTHER" id="PTHR30115">
    <property type="entry name" value="NITROGEN REGULATORY PROTEIN P-II"/>
    <property type="match status" value="1"/>
</dbReference>
<dbReference type="PANTHER" id="PTHR30115:SF13">
    <property type="entry name" value="PII-LIKE PROTEIN GLNBI"/>
    <property type="match status" value="1"/>
</dbReference>
<dbReference type="Pfam" id="PF00543">
    <property type="entry name" value="P-II"/>
    <property type="match status" value="1"/>
</dbReference>
<dbReference type="PRINTS" id="PR00340">
    <property type="entry name" value="PIIGLNB"/>
</dbReference>
<dbReference type="SMART" id="SM00938">
    <property type="entry name" value="P-II"/>
    <property type="match status" value="1"/>
</dbReference>
<dbReference type="SUPFAM" id="SSF54913">
    <property type="entry name" value="GlnB-like"/>
    <property type="match status" value="1"/>
</dbReference>
<dbReference type="PROSITE" id="PS00638">
    <property type="entry name" value="PII_GLNB_CTER"/>
    <property type="match status" value="1"/>
</dbReference>
<dbReference type="PROSITE" id="PS51343">
    <property type="entry name" value="PII_GLNB_DOM"/>
    <property type="match status" value="1"/>
</dbReference>
<comment type="function">
    <text>Could be involved in the regulation of nitrogen fixation.</text>
</comment>
<comment type="similarity">
    <text evidence="1">Belongs to the P(II) protein family.</text>
</comment>
<organism>
    <name type="scientific">Methanosarcina barkeri</name>
    <dbReference type="NCBI Taxonomy" id="2208"/>
    <lineage>
        <taxon>Archaea</taxon>
        <taxon>Methanobacteriati</taxon>
        <taxon>Methanobacteriota</taxon>
        <taxon>Stenosarchaea group</taxon>
        <taxon>Methanomicrobia</taxon>
        <taxon>Methanosarcinales</taxon>
        <taxon>Methanosarcinaceae</taxon>
        <taxon>Methanosarcina</taxon>
    </lineage>
</organism>
<reference key="1">
    <citation type="journal article" date="1991" name="Res. Microbiol.">
        <title>Nucleotide sequence of nifH regions from Methanobacterium ivanovii and Methanosarcina barkeri 227 and characterization of glnB-like genes.</title>
        <authorList>
            <person name="Sibold L."/>
            <person name="Henriquet M."/>
            <person name="Possot O."/>
            <person name="Aubert J.-P."/>
        </authorList>
    </citation>
    <scope>NUCLEOTIDE SEQUENCE [GENOMIC DNA]</scope>
    <source>
        <strain>ATCC 43241 / DSM 1538 / 227</strain>
    </source>
</reference>